<dbReference type="EC" id="2.1.1.-" evidence="1"/>
<dbReference type="EMBL" id="AP008232">
    <property type="protein sequence ID" value="BAE73426.1"/>
    <property type="molecule type" value="Genomic_DNA"/>
</dbReference>
<dbReference type="RefSeq" id="WP_011410015.1">
    <property type="nucleotide sequence ID" value="NC_007712.1"/>
</dbReference>
<dbReference type="SMR" id="Q2NWP9"/>
<dbReference type="STRING" id="343509.SG0151"/>
<dbReference type="KEGG" id="sgl:SG0151"/>
<dbReference type="eggNOG" id="COG2264">
    <property type="taxonomic scope" value="Bacteria"/>
</dbReference>
<dbReference type="HOGENOM" id="CLU_049382_4_1_6"/>
<dbReference type="OrthoDB" id="9785995at2"/>
<dbReference type="Proteomes" id="UP000001932">
    <property type="component" value="Chromosome"/>
</dbReference>
<dbReference type="GO" id="GO:0005829">
    <property type="term" value="C:cytosol"/>
    <property type="evidence" value="ECO:0007669"/>
    <property type="project" value="TreeGrafter"/>
</dbReference>
<dbReference type="GO" id="GO:0016279">
    <property type="term" value="F:protein-lysine N-methyltransferase activity"/>
    <property type="evidence" value="ECO:0007669"/>
    <property type="project" value="TreeGrafter"/>
</dbReference>
<dbReference type="GO" id="GO:0032259">
    <property type="term" value="P:methylation"/>
    <property type="evidence" value="ECO:0007669"/>
    <property type="project" value="UniProtKB-KW"/>
</dbReference>
<dbReference type="CDD" id="cd02440">
    <property type="entry name" value="AdoMet_MTases"/>
    <property type="match status" value="1"/>
</dbReference>
<dbReference type="Gene3D" id="3.40.50.150">
    <property type="entry name" value="Vaccinia Virus protein VP39"/>
    <property type="match status" value="1"/>
</dbReference>
<dbReference type="HAMAP" id="MF_00735">
    <property type="entry name" value="Methyltr_PrmA"/>
    <property type="match status" value="1"/>
</dbReference>
<dbReference type="InterPro" id="IPR050078">
    <property type="entry name" value="Ribosomal_L11_MeTrfase_PrmA"/>
</dbReference>
<dbReference type="InterPro" id="IPR004498">
    <property type="entry name" value="Ribosomal_PrmA_MeTrfase"/>
</dbReference>
<dbReference type="InterPro" id="IPR029063">
    <property type="entry name" value="SAM-dependent_MTases_sf"/>
</dbReference>
<dbReference type="NCBIfam" id="TIGR00406">
    <property type="entry name" value="prmA"/>
    <property type="match status" value="1"/>
</dbReference>
<dbReference type="PANTHER" id="PTHR43648">
    <property type="entry name" value="ELECTRON TRANSFER FLAVOPROTEIN BETA SUBUNIT LYSINE METHYLTRANSFERASE"/>
    <property type="match status" value="1"/>
</dbReference>
<dbReference type="PANTHER" id="PTHR43648:SF1">
    <property type="entry name" value="ELECTRON TRANSFER FLAVOPROTEIN BETA SUBUNIT LYSINE METHYLTRANSFERASE"/>
    <property type="match status" value="1"/>
</dbReference>
<dbReference type="Pfam" id="PF06325">
    <property type="entry name" value="PrmA"/>
    <property type="match status" value="1"/>
</dbReference>
<dbReference type="PIRSF" id="PIRSF000401">
    <property type="entry name" value="RPL11_MTase"/>
    <property type="match status" value="1"/>
</dbReference>
<dbReference type="SUPFAM" id="SSF53335">
    <property type="entry name" value="S-adenosyl-L-methionine-dependent methyltransferases"/>
    <property type="match status" value="1"/>
</dbReference>
<evidence type="ECO:0000255" key="1">
    <source>
        <dbReference type="HAMAP-Rule" id="MF_00735"/>
    </source>
</evidence>
<name>PRMA_SODGM</name>
<protein>
    <recommendedName>
        <fullName evidence="1">Ribosomal protein L11 methyltransferase</fullName>
        <shortName evidence="1">L11 Mtase</shortName>
        <ecNumber evidence="1">2.1.1.-</ecNumber>
    </recommendedName>
</protein>
<keyword id="KW-0963">Cytoplasm</keyword>
<keyword id="KW-0489">Methyltransferase</keyword>
<keyword id="KW-0949">S-adenosyl-L-methionine</keyword>
<keyword id="KW-0808">Transferase</keyword>
<accession>Q2NWP9</accession>
<organism>
    <name type="scientific">Sodalis glossinidius (strain morsitans)</name>
    <dbReference type="NCBI Taxonomy" id="343509"/>
    <lineage>
        <taxon>Bacteria</taxon>
        <taxon>Pseudomonadati</taxon>
        <taxon>Pseudomonadota</taxon>
        <taxon>Gammaproteobacteria</taxon>
        <taxon>Enterobacterales</taxon>
        <taxon>Bruguierivoracaceae</taxon>
        <taxon>Sodalis</taxon>
    </lineage>
</organism>
<sequence>MPWIQLKITTTGQQADTLSDALTESGAVSVTFQDTHDVPVYEPLPGETRLWGDTDVIGLYDAATDIATVLDVLKTHPLLGADFTYKIEQLEDKDWEREWMDNFHPMRFGERLWICPSWRPVPDPQAVNVMLDPGLAFGTGTHPTTALCLQWLDGLDLRGKTVIDFGCGSGILAIAALKLGAAHAVGIDIDPQAILASRDNAQRNGVAELLTLYLPQQQPQDLHANVVVANILAGPLRELAPLIIDLPLPGGYLGLSGILASQAESVAQAYAAAFSLDPVAEKEEWCRITGTRR</sequence>
<proteinExistence type="inferred from homology"/>
<reference key="1">
    <citation type="journal article" date="2006" name="Genome Res.">
        <title>Massive genome erosion and functional adaptations provide insights into the symbiotic lifestyle of Sodalis glossinidius in the tsetse host.</title>
        <authorList>
            <person name="Toh H."/>
            <person name="Weiss B.L."/>
            <person name="Perkin S.A.H."/>
            <person name="Yamashita A."/>
            <person name="Oshima K."/>
            <person name="Hattori M."/>
            <person name="Aksoy S."/>
        </authorList>
    </citation>
    <scope>NUCLEOTIDE SEQUENCE [LARGE SCALE GENOMIC DNA]</scope>
    <source>
        <strain>morsitans</strain>
    </source>
</reference>
<comment type="function">
    <text evidence="1">Methylates ribosomal protein L11.</text>
</comment>
<comment type="catalytic activity">
    <reaction evidence="1">
        <text>L-lysyl-[protein] + 3 S-adenosyl-L-methionine = N(6),N(6),N(6)-trimethyl-L-lysyl-[protein] + 3 S-adenosyl-L-homocysteine + 3 H(+)</text>
        <dbReference type="Rhea" id="RHEA:54192"/>
        <dbReference type="Rhea" id="RHEA-COMP:9752"/>
        <dbReference type="Rhea" id="RHEA-COMP:13826"/>
        <dbReference type="ChEBI" id="CHEBI:15378"/>
        <dbReference type="ChEBI" id="CHEBI:29969"/>
        <dbReference type="ChEBI" id="CHEBI:57856"/>
        <dbReference type="ChEBI" id="CHEBI:59789"/>
        <dbReference type="ChEBI" id="CHEBI:61961"/>
    </reaction>
</comment>
<comment type="subcellular location">
    <subcellularLocation>
        <location evidence="1">Cytoplasm</location>
    </subcellularLocation>
</comment>
<comment type="similarity">
    <text evidence="1">Belongs to the methyltransferase superfamily. PrmA family.</text>
</comment>
<gene>
    <name evidence="1" type="primary">prmA</name>
    <name type="ordered locus">SG0151</name>
</gene>
<feature type="chain" id="PRO_1000046098" description="Ribosomal protein L11 methyltransferase">
    <location>
        <begin position="1"/>
        <end position="293"/>
    </location>
</feature>
<feature type="binding site" evidence="1">
    <location>
        <position position="145"/>
    </location>
    <ligand>
        <name>S-adenosyl-L-methionine</name>
        <dbReference type="ChEBI" id="CHEBI:59789"/>
    </ligand>
</feature>
<feature type="binding site" evidence="1">
    <location>
        <position position="166"/>
    </location>
    <ligand>
        <name>S-adenosyl-L-methionine</name>
        <dbReference type="ChEBI" id="CHEBI:59789"/>
    </ligand>
</feature>
<feature type="binding site" evidence="1">
    <location>
        <position position="188"/>
    </location>
    <ligand>
        <name>S-adenosyl-L-methionine</name>
        <dbReference type="ChEBI" id="CHEBI:59789"/>
    </ligand>
</feature>
<feature type="binding site" evidence="1">
    <location>
        <position position="230"/>
    </location>
    <ligand>
        <name>S-adenosyl-L-methionine</name>
        <dbReference type="ChEBI" id="CHEBI:59789"/>
    </ligand>
</feature>